<dbReference type="EMBL" id="AF070917">
    <property type="protein sequence ID" value="AAC23606.1"/>
    <property type="molecule type" value="mRNA"/>
</dbReference>
<dbReference type="RefSeq" id="NP_001268496.1">
    <property type="nucleotide sequence ID" value="NM_001281567.1"/>
</dbReference>
<dbReference type="RefSeq" id="XP_012972924.1">
    <property type="nucleotide sequence ID" value="XM_013117470.1"/>
</dbReference>
<dbReference type="RefSeq" id="XP_012972925.1">
    <property type="nucleotide sequence ID" value="XM_013117471.1"/>
</dbReference>
<dbReference type="RefSeq" id="XP_012972926.1">
    <property type="nucleotide sequence ID" value="XM_013117472.1"/>
</dbReference>
<dbReference type="RefSeq" id="XP_012972927.1">
    <property type="nucleotide sequence ID" value="XM_013117473.1"/>
</dbReference>
<dbReference type="SMR" id="O88529"/>
<dbReference type="IntAct" id="O88529">
    <property type="interactions" value="1"/>
</dbReference>
<dbReference type="STRING" id="10036.ENSMAUP00000007669"/>
<dbReference type="Ensembl" id="ENSMAUT00000011481">
    <property type="protein sequence ID" value="ENSMAUP00000007669"/>
    <property type="gene ID" value="ENSMAUG00000009271"/>
</dbReference>
<dbReference type="GeneID" id="101835598"/>
<dbReference type="KEGG" id="maua:101835598"/>
<dbReference type="CTD" id="406"/>
<dbReference type="eggNOG" id="KOG3561">
    <property type="taxonomic scope" value="Eukaryota"/>
</dbReference>
<dbReference type="OrthoDB" id="71302at2759"/>
<dbReference type="Proteomes" id="UP000189706">
    <property type="component" value="Unplaced"/>
</dbReference>
<dbReference type="GO" id="GO:0033391">
    <property type="term" value="C:chromatoid body"/>
    <property type="evidence" value="ECO:0000250"/>
    <property type="project" value="UniProtKB"/>
</dbReference>
<dbReference type="GO" id="GO:1990513">
    <property type="term" value="C:CLOCK-BMAL transcription complex"/>
    <property type="evidence" value="ECO:0007669"/>
    <property type="project" value="Ensembl"/>
</dbReference>
<dbReference type="GO" id="GO:0005634">
    <property type="term" value="C:nucleus"/>
    <property type="evidence" value="ECO:0000250"/>
    <property type="project" value="UniProtKB"/>
</dbReference>
<dbReference type="GO" id="GO:0016605">
    <property type="term" value="C:PML body"/>
    <property type="evidence" value="ECO:0007669"/>
    <property type="project" value="UniProtKB-SubCell"/>
</dbReference>
<dbReference type="GO" id="GO:0005667">
    <property type="term" value="C:transcription regulator complex"/>
    <property type="evidence" value="ECO:0000250"/>
    <property type="project" value="UniProtKB"/>
</dbReference>
<dbReference type="GO" id="GO:0017162">
    <property type="term" value="F:aryl hydrocarbon receptor binding"/>
    <property type="evidence" value="ECO:0007669"/>
    <property type="project" value="Ensembl"/>
</dbReference>
<dbReference type="GO" id="GO:0003677">
    <property type="term" value="F:DNA binding"/>
    <property type="evidence" value="ECO:0000250"/>
    <property type="project" value="UniProtKB"/>
</dbReference>
<dbReference type="GO" id="GO:0003700">
    <property type="term" value="F:DNA-binding transcription factor activity"/>
    <property type="evidence" value="ECO:0007669"/>
    <property type="project" value="InterPro"/>
</dbReference>
<dbReference type="GO" id="GO:0070888">
    <property type="term" value="F:E-box binding"/>
    <property type="evidence" value="ECO:0000250"/>
    <property type="project" value="UniProtKB"/>
</dbReference>
<dbReference type="GO" id="GO:0051879">
    <property type="term" value="F:Hsp90 protein binding"/>
    <property type="evidence" value="ECO:0007669"/>
    <property type="project" value="Ensembl"/>
</dbReference>
<dbReference type="GO" id="GO:0046983">
    <property type="term" value="F:protein dimerization activity"/>
    <property type="evidence" value="ECO:0007669"/>
    <property type="project" value="InterPro"/>
</dbReference>
<dbReference type="GO" id="GO:0000978">
    <property type="term" value="F:RNA polymerase II cis-regulatory region sequence-specific DNA binding"/>
    <property type="evidence" value="ECO:0000250"/>
    <property type="project" value="UniProtKB"/>
</dbReference>
<dbReference type="GO" id="GO:0043565">
    <property type="term" value="F:sequence-specific DNA binding"/>
    <property type="evidence" value="ECO:0000250"/>
    <property type="project" value="UniProtKB"/>
</dbReference>
<dbReference type="GO" id="GO:0000976">
    <property type="term" value="F:transcription cis-regulatory region binding"/>
    <property type="evidence" value="ECO:0000250"/>
    <property type="project" value="UniProtKB"/>
</dbReference>
<dbReference type="GO" id="GO:0032922">
    <property type="term" value="P:circadian regulation of gene expression"/>
    <property type="evidence" value="ECO:0000250"/>
    <property type="project" value="UniProtKB"/>
</dbReference>
<dbReference type="GO" id="GO:0045892">
    <property type="term" value="P:negative regulation of DNA-templated transcription"/>
    <property type="evidence" value="ECO:0000250"/>
    <property type="project" value="UniProtKB"/>
</dbReference>
<dbReference type="GO" id="GO:0045599">
    <property type="term" value="P:negative regulation of fat cell differentiation"/>
    <property type="evidence" value="ECO:0000250"/>
    <property type="project" value="UniProtKB"/>
</dbReference>
<dbReference type="GO" id="GO:2000323">
    <property type="term" value="P:negative regulation of nuclear receptor-mediated glucocorticoid signaling pathway"/>
    <property type="evidence" value="ECO:0000250"/>
    <property type="project" value="UniProtKB"/>
</dbReference>
<dbReference type="GO" id="GO:0032007">
    <property type="term" value="P:negative regulation of TOR signaling"/>
    <property type="evidence" value="ECO:0000250"/>
    <property type="project" value="UniProtKB"/>
</dbReference>
<dbReference type="GO" id="GO:0090403">
    <property type="term" value="P:oxidative stress-induced premature senescence"/>
    <property type="evidence" value="ECO:0000250"/>
    <property type="project" value="UniProtKB"/>
</dbReference>
<dbReference type="GO" id="GO:0090263">
    <property type="term" value="P:positive regulation of canonical Wnt signaling pathway"/>
    <property type="evidence" value="ECO:0000250"/>
    <property type="project" value="UniProtKB"/>
</dbReference>
<dbReference type="GO" id="GO:0042753">
    <property type="term" value="P:positive regulation of circadian rhythm"/>
    <property type="evidence" value="ECO:0000250"/>
    <property type="project" value="UniProtKB"/>
</dbReference>
<dbReference type="GO" id="GO:0045893">
    <property type="term" value="P:positive regulation of DNA-templated transcription"/>
    <property type="evidence" value="ECO:0000250"/>
    <property type="project" value="UniProtKB"/>
</dbReference>
<dbReference type="GO" id="GO:1901985">
    <property type="term" value="P:positive regulation of protein acetylation"/>
    <property type="evidence" value="ECO:0000250"/>
    <property type="project" value="UniProtKB"/>
</dbReference>
<dbReference type="GO" id="GO:2001016">
    <property type="term" value="P:positive regulation of skeletal muscle cell differentiation"/>
    <property type="evidence" value="ECO:0000250"/>
    <property type="project" value="UniProtKB"/>
</dbReference>
<dbReference type="GO" id="GO:0045944">
    <property type="term" value="P:positive regulation of transcription by RNA polymerase II"/>
    <property type="evidence" value="ECO:0007669"/>
    <property type="project" value="Ensembl"/>
</dbReference>
<dbReference type="GO" id="GO:0043161">
    <property type="term" value="P:proteasome-mediated ubiquitin-dependent protein catabolic process"/>
    <property type="evidence" value="ECO:0000250"/>
    <property type="project" value="UniProtKB"/>
</dbReference>
<dbReference type="GO" id="GO:0051726">
    <property type="term" value="P:regulation of cell cycle"/>
    <property type="evidence" value="ECO:0000250"/>
    <property type="project" value="UniProtKB"/>
</dbReference>
<dbReference type="GO" id="GO:2000772">
    <property type="term" value="P:regulation of cellular senescence"/>
    <property type="evidence" value="ECO:0000250"/>
    <property type="project" value="UniProtKB"/>
</dbReference>
<dbReference type="GO" id="GO:0006355">
    <property type="term" value="P:regulation of DNA-templated transcription"/>
    <property type="evidence" value="ECO:0000250"/>
    <property type="project" value="UniProtKB"/>
</dbReference>
<dbReference type="GO" id="GO:0042634">
    <property type="term" value="P:regulation of hair cycle"/>
    <property type="evidence" value="ECO:0000250"/>
    <property type="project" value="UniProtKB"/>
</dbReference>
<dbReference type="GO" id="GO:0050796">
    <property type="term" value="P:regulation of insulin secretion"/>
    <property type="evidence" value="ECO:0000250"/>
    <property type="project" value="UniProtKB"/>
</dbReference>
<dbReference type="GO" id="GO:0050767">
    <property type="term" value="P:regulation of neurogenesis"/>
    <property type="evidence" value="ECO:0000250"/>
    <property type="project" value="UniProtKB"/>
</dbReference>
<dbReference type="GO" id="GO:2000074">
    <property type="term" value="P:regulation of type B pancreatic cell development"/>
    <property type="evidence" value="ECO:0000250"/>
    <property type="project" value="UniProtKB"/>
</dbReference>
<dbReference type="GO" id="GO:0051775">
    <property type="term" value="P:response to redox state"/>
    <property type="evidence" value="ECO:0000250"/>
    <property type="project" value="UniProtKB"/>
</dbReference>
<dbReference type="GO" id="GO:0007283">
    <property type="term" value="P:spermatogenesis"/>
    <property type="evidence" value="ECO:0000250"/>
    <property type="project" value="UniProtKB"/>
</dbReference>
<dbReference type="CDD" id="cd11438">
    <property type="entry name" value="bHLH-PAS_ARNTL_PASD3"/>
    <property type="match status" value="1"/>
</dbReference>
<dbReference type="CDD" id="cd00130">
    <property type="entry name" value="PAS"/>
    <property type="match status" value="2"/>
</dbReference>
<dbReference type="FunFam" id="4.10.280.10:FF:000018">
    <property type="entry name" value="Aryl hydrocarbon receptor nuclear translocator-like protein 1"/>
    <property type="match status" value="1"/>
</dbReference>
<dbReference type="FunFam" id="3.30.450.20:FF:000006">
    <property type="entry name" value="aryl hydrocarbon receptor nuclear translocator-like protein 1"/>
    <property type="match status" value="1"/>
</dbReference>
<dbReference type="FunFam" id="3.30.450.20:FF:000010">
    <property type="entry name" value="Aryl hydrocarbon receptor nuclear translocator-like, isoform CRA_b"/>
    <property type="match status" value="1"/>
</dbReference>
<dbReference type="Gene3D" id="4.10.280.10">
    <property type="entry name" value="Helix-loop-helix DNA-binding domain"/>
    <property type="match status" value="1"/>
</dbReference>
<dbReference type="Gene3D" id="3.30.450.20">
    <property type="entry name" value="PAS domain"/>
    <property type="match status" value="2"/>
</dbReference>
<dbReference type="InterPro" id="IPR011598">
    <property type="entry name" value="bHLH_dom"/>
</dbReference>
<dbReference type="InterPro" id="IPR050933">
    <property type="entry name" value="Circadian_TF"/>
</dbReference>
<dbReference type="InterPro" id="IPR036638">
    <property type="entry name" value="HLH_DNA-bd_sf"/>
</dbReference>
<dbReference type="InterPro" id="IPR001067">
    <property type="entry name" value="Nuc_translocat"/>
</dbReference>
<dbReference type="InterPro" id="IPR001610">
    <property type="entry name" value="PAC"/>
</dbReference>
<dbReference type="InterPro" id="IPR000014">
    <property type="entry name" value="PAS"/>
</dbReference>
<dbReference type="InterPro" id="IPR035965">
    <property type="entry name" value="PAS-like_dom_sf"/>
</dbReference>
<dbReference type="InterPro" id="IPR013767">
    <property type="entry name" value="PAS_fold"/>
</dbReference>
<dbReference type="NCBIfam" id="TIGR00229">
    <property type="entry name" value="sensory_box"/>
    <property type="match status" value="1"/>
</dbReference>
<dbReference type="PANTHER" id="PTHR23042">
    <property type="entry name" value="CIRCADIAN PROTEIN CLOCK/ARNT/BMAL/PAS"/>
    <property type="match status" value="1"/>
</dbReference>
<dbReference type="Pfam" id="PF00010">
    <property type="entry name" value="HLH"/>
    <property type="match status" value="1"/>
</dbReference>
<dbReference type="Pfam" id="PF00989">
    <property type="entry name" value="PAS"/>
    <property type="match status" value="1"/>
</dbReference>
<dbReference type="Pfam" id="PF14598">
    <property type="entry name" value="PAS_11"/>
    <property type="match status" value="1"/>
</dbReference>
<dbReference type="PRINTS" id="PR00785">
    <property type="entry name" value="NCTRNSLOCATR"/>
</dbReference>
<dbReference type="SMART" id="SM00353">
    <property type="entry name" value="HLH"/>
    <property type="match status" value="1"/>
</dbReference>
<dbReference type="SMART" id="SM00086">
    <property type="entry name" value="PAC"/>
    <property type="match status" value="1"/>
</dbReference>
<dbReference type="SMART" id="SM00091">
    <property type="entry name" value="PAS"/>
    <property type="match status" value="2"/>
</dbReference>
<dbReference type="SUPFAM" id="SSF47459">
    <property type="entry name" value="HLH, helix-loop-helix DNA-binding domain"/>
    <property type="match status" value="1"/>
</dbReference>
<dbReference type="SUPFAM" id="SSF55785">
    <property type="entry name" value="PYP-like sensor domain (PAS domain)"/>
    <property type="match status" value="2"/>
</dbReference>
<dbReference type="PROSITE" id="PS50888">
    <property type="entry name" value="BHLH"/>
    <property type="match status" value="1"/>
</dbReference>
<dbReference type="PROSITE" id="PS50112">
    <property type="entry name" value="PAS"/>
    <property type="match status" value="2"/>
</dbReference>
<feature type="chain" id="PRO_0000127157" description="Basic helix-loop-helix ARNT-like protein 1">
    <location>
        <begin position="1"/>
        <end position="626"/>
    </location>
</feature>
<feature type="domain" description="bHLH" evidence="4">
    <location>
        <begin position="72"/>
        <end position="125"/>
    </location>
</feature>
<feature type="domain" description="PAS 1" evidence="3">
    <location>
        <begin position="143"/>
        <end position="215"/>
    </location>
</feature>
<feature type="domain" description="PAS 2" evidence="3">
    <location>
        <begin position="326"/>
        <end position="396"/>
    </location>
</feature>
<feature type="domain" description="PAC">
    <location>
        <begin position="401"/>
        <end position="444"/>
    </location>
</feature>
<feature type="region of interest" description="Disordered" evidence="5">
    <location>
        <begin position="1"/>
        <end position="58"/>
    </location>
</feature>
<feature type="region of interest" description="Disordered" evidence="5">
    <location>
        <begin position="459"/>
        <end position="492"/>
    </location>
</feature>
<feature type="region of interest" description="Interaction with CIART" evidence="2">
    <location>
        <begin position="508"/>
        <end position="588"/>
    </location>
</feature>
<feature type="region of interest" description="Disordered" evidence="5">
    <location>
        <begin position="511"/>
        <end position="595"/>
    </location>
</feature>
<feature type="short sequence motif" description="Nuclear localization signal" evidence="2">
    <location>
        <begin position="36"/>
        <end position="41"/>
    </location>
</feature>
<feature type="short sequence motif" description="Nuclear export signal 1" evidence="2">
    <location>
        <begin position="142"/>
        <end position="152"/>
    </location>
</feature>
<feature type="short sequence motif" description="Nuclear export signal 2" evidence="2">
    <location>
        <begin position="361"/>
        <end position="369"/>
    </location>
</feature>
<feature type="compositionally biased region" description="Low complexity" evidence="5">
    <location>
        <begin position="17"/>
        <end position="32"/>
    </location>
</feature>
<feature type="compositionally biased region" description="Low complexity" evidence="5">
    <location>
        <begin position="511"/>
        <end position="521"/>
    </location>
</feature>
<feature type="site" description="Interaction with E-box DNA" evidence="1">
    <location>
        <position position="77"/>
    </location>
</feature>
<feature type="site" description="Interaction with E-box DNA" evidence="1">
    <location>
        <position position="80"/>
    </location>
</feature>
<feature type="site" description="Interaction with E-box DNA" evidence="1">
    <location>
        <position position="81"/>
    </location>
</feature>
<feature type="site" description="Interaction with E-box DNA" evidence="1">
    <location>
        <position position="85"/>
    </location>
</feature>
<feature type="site" description="Important for interaction with CLOCK" evidence="1">
    <location>
        <position position="125"/>
    </location>
</feature>
<feature type="modified residue" description="Phosphoserine; by GSK3-beta" evidence="2">
    <location>
        <position position="17"/>
    </location>
</feature>
<feature type="modified residue" description="Phosphothreonine; by GSK3-beta" evidence="2">
    <location>
        <position position="21"/>
    </location>
</feature>
<feature type="modified residue" description="Phosphoserine" evidence="1">
    <location>
        <position position="78"/>
    </location>
</feature>
<feature type="modified residue" description="Phosphoserine; by CK2" evidence="2">
    <location>
        <position position="90"/>
    </location>
</feature>
<feature type="modified residue" description="N6-acetyllysine" evidence="2">
    <location>
        <position position="538"/>
    </location>
</feature>
<feature type="cross-link" description="Glycyl lysine isopeptide (Lys-Gly) (interchain with G-Cter in SUMO2 and SUMO3)" evidence="2">
    <location>
        <position position="252"/>
    </location>
</feature>
<feature type="cross-link" description="Glycyl lysine isopeptide (Lys-Gly) (interchain with G-Cter in SUMO); alternate" evidence="2">
    <location>
        <position position="259"/>
    </location>
</feature>
<feature type="cross-link" description="Glycyl lysine isopeptide (Lys-Gly) (interchain with G-Cter in SUMO2); alternate" evidence="1">
    <location>
        <position position="259"/>
    </location>
</feature>
<sequence>MADQRMDISSTISDFMSPGPTDLLSSSLGTSGVDCNRKRKGSATDYQESMDTDKDDPHGRLEYAEHQGRIKNAREAHSQIEKRRRDKMNSFIDELASLVPTCNAMSRKLDKLTVLRMAVQHMKTLRGATNPYTEANYKPTFLSDDELKHLILRAADGFLFVVGCDRGKILFVSESVFKILNYSQNDLIGQSLFDYLHPKDIAKVKEQLSSSDTAPRERLIDAKTGLPVKTDITPGPSRLCSGARRSFFCRMKCNRPSVKVEDKDFASTCSKKKADRKSFCTIHSTGYLKSWPPTKMGLDEDNEPDNEGCNLSCLVAIGRLHSHVVPQPVNGEIRVKSMEYVSRHAIDGKFVFVDQRATAILAYLPQELLGTSCYEYFHQDDIGHLAECHRQVLQTREKITTNCYKFKIKDGSFITLRSRWFSFMNPWTKEVEYIVSTNTVVLANVLEGGDPTFPQLTASPHSMDSMLPSGEGGPKRTHPTVPGIPGGTRAGAGKIGRMIAEEIMEIHRIRGSSPSSCGSSPLNITSTPPPDASSPGGKKILNGGTPDIPSTGLLPGQAQETPGYPYSDSSSILGENPHIGIDMIDNDQGSSSPSNDEAAMAVIMSLLEADAGLGGPVDFSDLPWPL</sequence>
<organism>
    <name type="scientific">Mesocricetus auratus</name>
    <name type="common">Golden hamster</name>
    <dbReference type="NCBI Taxonomy" id="10036"/>
    <lineage>
        <taxon>Eukaryota</taxon>
        <taxon>Metazoa</taxon>
        <taxon>Chordata</taxon>
        <taxon>Craniata</taxon>
        <taxon>Vertebrata</taxon>
        <taxon>Euteleostomi</taxon>
        <taxon>Mammalia</taxon>
        <taxon>Eutheria</taxon>
        <taxon>Euarchontoglires</taxon>
        <taxon>Glires</taxon>
        <taxon>Rodentia</taxon>
        <taxon>Myomorpha</taxon>
        <taxon>Muroidea</taxon>
        <taxon>Cricetidae</taxon>
        <taxon>Cricetinae</taxon>
        <taxon>Mesocricetus</taxon>
    </lineage>
</organism>
<name>BMAL1_MESAU</name>
<proteinExistence type="evidence at transcript level"/>
<comment type="function">
    <text evidence="1 2">Transcriptional activator which forms a core component of the circadian clock. The circadian clock, an internal time-keeping system, regulates various physiological processes through the generation of approximately 24 hour circadian rhythms in gene expression, which are translated into rhythms in metabolism and behavior. It is derived from the Latin roots 'circa' (about) and 'diem' (day) and acts as an important regulator of a wide array of physiological functions including metabolism, sleep, body temperature, blood pressure, endocrine, immune, cardiovascular, and renal function. Consists of two major components: the central clock, residing in the suprachiasmatic nucleus (SCN) of the brain, and the peripheral clocks that are present in nearly every tissue and organ system. Both the central and peripheral clocks can be reset by environmental cues, also known as Zeitgebers (German for 'timegivers'). The predominant Zeitgeber for the central clock is light, which is sensed by retina and signals directly to the SCN. The central clock entrains the peripheral clocks through neuronal and hormonal signals, body temperature and feeding-related cues, aligning all clocks with the external light/dark cycle. Circadian rhythms allow an organism to achieve temporal homeostasis with its environment at the molecular level by regulating gene expression to create a peak of protein expression once every 24 hours to control when a particular physiological process is most active with respect to the solar day. Transcription and translation of core clock components (CLOCK, NPAS2, BMAL1, BMAL2, PER1, PER2, PER3, CRY1 and CRY2) plays a critical role in rhythm generation, whereas delays imposed by post-translational modifications (PTMs) are important for determining the period (tau) of the rhythms (tau refers to the period of a rhythm and is the length, in time, of one complete cycle). A diurnal rhythm is synchronized with the day/night cycle, while the ultradian and infradian rhythms have a period shorter and longer than 24 hours, respectively. Disruptions in the circadian rhythms contribute to the pathology of cardiovascular diseases, cancer, metabolic syndromes and aging. A transcription/translation feedback loop (TTFL) forms the core of the molecular circadian clock mechanism. Transcription factors, CLOCK or NPAS2 and BMAL1 or BMAL2, form the positive limb of the feedback loop, act in the form of a heterodimer and activate the transcription of core clock genes and clock-controlled genes (involved in key metabolic processes), harboring E-box elements (5'-CACGTG-3') within their promoters. The core clock genes: PER1/2/3 and CRY1/2 which are transcriptional repressors form the negative limb of the feedback loop and interact with the CLOCK|NPAS2-BMAL1|BMAL2 heterodimer inhibiting its activity and thereby negatively regulating their own expression. This heterodimer also activates nuclear receptors NR1D1/2 and RORA/B/G, which form a second feedback loop and which activate and repress BMAL1 transcription, respectively. BMAL1 positively regulates myogenesis and negatively regulates adipogenesis via the transcriptional control of the genes of the canonical Wnt signaling pathway. Plays a role in normal pancreatic beta-cell function; regulates glucose-stimulated insulin secretion via the regulation of antioxidant genes NFE2L2/NRF2 and its targets SESN2, PRDX3, CCLC and CCLM. Negatively regulates the mTORC1 signaling pathway; regulates the expression of MTOR and DEPTOR. Controls diurnal oscillations of Ly6C inflammatory monocytes; rhythmic recruitment of the PRC2 complex imparts diurnal variation to chemokine expression that is necessary to sustain Ly6C monocyte rhythms. Regulates the expression of HSD3B2, STAR, PTGS2, CYP11A1, CYP19A1 and LHCGR in the ovary and also the genes involved in hair growth. Plays an important role in adult hippocampal neurogenesis by regulating the timely entry of neural stem/progenitor cells (NSPCs) into the cell cycle and the number of cell divisions that take place prior to cell-cycle exit. Regulates the circadian expression of CIART and KLF11. The CLOCK-BMAL1 heterodimer regulates the circadian expression of SERPINE1/PAI1, VWF, B3, CCRN4L/NOC, NAMPT, DBP, MYOD1, PPARGC1A, PPARGC1B, SIRT1, GYS2, F7, NGFR, GNRHR, BHLHE40/DEC1, ATF4, MTA1, KLF10 and also genes implicated in glucose and lipid metabolism. Promotes rhythmic chromatin opening, regulating the DNA accessibility of other transcription factors. The NPAS2-BMAL1 heterodimer positively regulates the expression of MAOA, F7 and LDHA and modulates the circadian rhythm of daytime contrast sensitivity by regulating the rhythmic expression of adenylate cyclase type 1 (ADCY1) in the retina. The preferred binding motif for the CLOCK-BMAL1 heterodimer is 5'-CACGTGA-3', which contains a flanking adenine nucleotide at the 3-prime end of the canonical 6-nucleotide E-box sequence. CLOCK specifically binds to the half-site 5'-CAC-3', while BMAL1 binds to the half-site 5'-GTGA-3'. The CLOCK-BMAL1 heterodimer also recognizes the non-canonical E-box motifs 5'-AACGTGA-3' and 5'-CATGTGA-3'. Essential for the rhythmic interaction of CLOCK with ASS1 and plays a critical role in positively regulating CLOCK-mediated acetylation of ASS1. Plays a role in protecting against lethal sepsis by limiting the expression of immune checkpoint protein CD274 in macrophages in a PKM2-dependent manner (By similarity). Regulates the diurnal rhythms of skeletal muscle metabolism via transcriptional activation of genes promoting triglyceride synthesis (DGAT2) and metabolic efficiency (COQ10B) (By similarity).</text>
</comment>
<comment type="subunit">
    <text evidence="1 2">Component of the circadian clock oscillator which includes the CRY1/2 proteins, CLOCK or NPAS2, BMAL1 or BMAL2, CSNK1D and/or CSNK1E, TIMELESS and the PER1/2/3 proteins (By similarity). Forms a heterodimer with CLOCK (By similarity). The CLOCK-BMAL1 heterodimer is required for E-box-dependent transactivation, for CLOCK nuclear translocation and degradation, and, for phosphorylation of both CLOCK and BMAL1 (By similarity). Part of a nuclear complex which also includes RACK1 and PRKCA; RACK1 and PRKCA are recruited to the complex in a circadian manner (By similarity). Interacts with NPAS2 (By similarity). Interacts with EZH2 (By similarity). Interacts with SUMO3 (By similarity). Interacts with SIRT1 (By similarity). Interacts with AHR (By similarity). Interacts with ID1, ID2 and ID3 (By similarity). Interacts with DDX4 (By similarity). Interacts with OGT (By similarity). Interacts with EED and SUZ12 (By similarity). Interacts with MTA1 (By similarity). Interacts with CIART (By similarity). Interacts with HSP90 (By similarity). Interacts with KAT2B and EP300 (By similarity). Interacts with BHLHE40/DEC1 and BHLHE41/DEC2 (By similarity). Interacts with RELB and the interaction is enhanced in the presence of CLOCK (By similarity). Interacts with PER1, PER2, CRY1 and CRY2 and this interaction requires a translocation to the nucleus (By similarity). Interaction of the CLOCK-BMAL1 heterodimer with PER or CRY inhibits transcription activation (By similarity). Interaction of the CLOCK-BMAL1 with CRY1 is independent of DNA but with PER2 is off DNA (By similarity). The CLOCK-BMAL1 heterodimer interacts with GSK3B (By similarity). Interacts with KDM5A (By similarity). Interacts with KMT2A; in a circadian manner (By similarity). Interacts with UBE3A (By similarity). Interacts with PRKCG (By similarity). Interacts with MAGEL2 (By similarity). Interacts with NCOA2 (By similarity). Interacts with THRAP3 (By similarity). The CLOCK-BMAL1 heterodimer interacts with PASD1 (By similarity). Interacts with PASD1 (By similarity). Interacts with USP9X (By similarity). Interacts with PIWIL2 (via PIWI domain) (By similarity). Interacts with HDAC3 (By similarity). Interacts with HNF4A (By similarity).</text>
</comment>
<comment type="subcellular location">
    <subcellularLocation>
        <location evidence="4">Nucleus</location>
    </subcellularLocation>
    <subcellularLocation>
        <location evidence="2">Cytoplasm</location>
    </subcellularLocation>
    <subcellularLocation>
        <location evidence="2">Nucleus</location>
        <location evidence="2">PML body</location>
    </subcellularLocation>
    <text evidence="2">Shuttles between the nucleus and the cytoplasm and this nucleocytoplasmic shuttling is essential for the nuclear accumulation of CLOCK, target gene transcription and the degradation of the CLOCK-BMAL1 heterodimer. The sumoylated form localizes in the PML body. Sequestered to the cytoplasm in the presence of ID2.</text>
</comment>
<comment type="PTM">
    <text evidence="2">Ubiquitinated, leading to its proteasomal degradation. Deubiquitinated by USP9X.</text>
</comment>
<comment type="PTM">
    <text evidence="2">O-glycosylated; contains O-GlcNAc. O-glycosylation by OGT prevents protein degradation by inhibiting ubiquitination. It also stabilizes the CLOCK-BMAL1 heterodimer thereby increasing CLOCK-BMAL1-mediated transcription of genes in the negative loop of the circadian clock such as PER1/2/3 and CRY1/2.</text>
</comment>
<comment type="PTM">
    <text evidence="2">Acetylated on Lys-538 by CLOCK during the repression phase of the circadian cycle. Acetylation facilitates recruitment of CRY1 protein and initiates the repression phase of the circadian cycle. Acetylated at Lys-538 by KAT5 during the activation phase of the cycle, leading to recruitment of the positive transcription elongation factor b (P-TEFb) and BRD4, followed by productive elongation of circadian transcripts. Deacetylated by SIRT1, which may result in decreased protein stability.</text>
</comment>
<comment type="PTM">
    <text evidence="1 2">Phosphorylated upon dimerization with CLOCK. Phosphorylation enhances the transcriptional activity, alters the subcellular localization and decreases the stability of the CLOCK-BMAL1 heterodimer by promoting its degradation. Phosphorylation shows circadian variations in the liver with a peak between CT10 to CT14. Phosphorylation at Ser-90 by CK2 is essential for its nuclear localization, its interaction with CLOCK and controls CLOCK nuclear entry. Dephosphorylation at Ser-78 is important for dimerization with CLOCK and transcriptional activity.</text>
</comment>
<comment type="PTM">
    <text evidence="2">Sumoylated on Lys-259 upon dimerization with CLOCK. Predominantly conjugated to poly-SUMO2/3 rather than SUMO1 and the level of these conjugates undergo rhythmic variation, peaking at CT9-CT12. Sumoylation localizes it exclusively to the PML body and promotes its ubiquitination in the PML body, ubiquitin-dependent proteasomal degradation and the transcriptional activity of the CLOCK-BMAL1 heterodimer.</text>
</comment>
<comment type="PTM">
    <text evidence="2">Undergoes lysosome-mediated degradation in a time-dependent manner in the liver.</text>
</comment>
<accession>O88529</accession>
<keyword id="KW-0007">Acetylation</keyword>
<keyword id="KW-0010">Activator</keyword>
<keyword id="KW-0090">Biological rhythms</keyword>
<keyword id="KW-0963">Cytoplasm</keyword>
<keyword id="KW-0238">DNA-binding</keyword>
<keyword id="KW-1017">Isopeptide bond</keyword>
<keyword id="KW-0539">Nucleus</keyword>
<keyword id="KW-0597">Phosphoprotein</keyword>
<keyword id="KW-1185">Reference proteome</keyword>
<keyword id="KW-0677">Repeat</keyword>
<keyword id="KW-0804">Transcription</keyword>
<keyword id="KW-0805">Transcription regulation</keyword>
<keyword id="KW-0832">Ubl conjugation</keyword>
<reference key="1">
    <citation type="journal article" date="1998" name="Science">
        <title>Role of the CLOCK protein in the mammalian circadian mechanism.</title>
        <authorList>
            <person name="Gekakis N."/>
            <person name="Staknis D."/>
            <person name="Nguyen H.B."/>
            <person name="Davis F.C."/>
            <person name="Wilsbacher L.D."/>
            <person name="King D.P."/>
            <person name="Takahashi J.S."/>
            <person name="Weitz C.J."/>
        </authorList>
    </citation>
    <scope>NUCLEOTIDE SEQUENCE [MRNA]</scope>
</reference>
<protein>
    <recommendedName>
        <fullName>Basic helix-loop-helix ARNT-like protein 1</fullName>
    </recommendedName>
    <alternativeName>
        <fullName>Aryl hydrocarbon receptor nuclear translocator-like protein 1</fullName>
    </alternativeName>
    <alternativeName>
        <fullName>Brain and muscle ARNT-like 1</fullName>
    </alternativeName>
</protein>
<gene>
    <name type="primary">BMAL1</name>
    <name type="synonym">ARNTL</name>
</gene>
<evidence type="ECO:0000250" key="1">
    <source>
        <dbReference type="UniProtKB" id="O00327"/>
    </source>
</evidence>
<evidence type="ECO:0000250" key="2">
    <source>
        <dbReference type="UniProtKB" id="Q9WTL8"/>
    </source>
</evidence>
<evidence type="ECO:0000255" key="3">
    <source>
        <dbReference type="PROSITE-ProRule" id="PRU00140"/>
    </source>
</evidence>
<evidence type="ECO:0000255" key="4">
    <source>
        <dbReference type="PROSITE-ProRule" id="PRU00981"/>
    </source>
</evidence>
<evidence type="ECO:0000256" key="5">
    <source>
        <dbReference type="SAM" id="MobiDB-lite"/>
    </source>
</evidence>